<proteinExistence type="evidence at transcript level"/>
<dbReference type="EC" id="1.-.-.-" evidence="7"/>
<dbReference type="EMBL" id="CM002236">
    <property type="protein sequence ID" value="EAA36367.1"/>
    <property type="molecule type" value="Genomic_DNA"/>
</dbReference>
<dbReference type="RefSeq" id="XP_965603.1">
    <property type="nucleotide sequence ID" value="XM_960510.1"/>
</dbReference>
<dbReference type="SMR" id="Q7SHI3"/>
<dbReference type="STRING" id="367110.Q7SHI3"/>
<dbReference type="PaxDb" id="5141-EFNCRP00000002500"/>
<dbReference type="EnsemblFungi" id="EAA36367">
    <property type="protein sequence ID" value="EAA36367"/>
    <property type="gene ID" value="NCU02921"/>
</dbReference>
<dbReference type="GeneID" id="3881728"/>
<dbReference type="KEGG" id="ncr:NCU02921"/>
<dbReference type="VEuPathDB" id="FungiDB:NCU02921"/>
<dbReference type="HOGENOM" id="CLU_096188_0_2_1"/>
<dbReference type="InParanoid" id="Q7SHI3"/>
<dbReference type="OMA" id="HRAMTID"/>
<dbReference type="OrthoDB" id="5840532at2759"/>
<dbReference type="Proteomes" id="UP000001805">
    <property type="component" value="Chromosome 1, Linkage Group I"/>
</dbReference>
<dbReference type="GO" id="GO:0016491">
    <property type="term" value="F:oxidoreductase activity"/>
    <property type="evidence" value="ECO:0007669"/>
    <property type="project" value="UniProtKB-KW"/>
</dbReference>
<dbReference type="CDD" id="cd02231">
    <property type="entry name" value="cupin_BLL6423-like"/>
    <property type="match status" value="1"/>
</dbReference>
<dbReference type="Gene3D" id="2.60.120.10">
    <property type="entry name" value="Jelly Rolls"/>
    <property type="match status" value="1"/>
</dbReference>
<dbReference type="InterPro" id="IPR047142">
    <property type="entry name" value="OryJ/VirC-like"/>
</dbReference>
<dbReference type="InterPro" id="IPR014710">
    <property type="entry name" value="RmlC-like_jellyroll"/>
</dbReference>
<dbReference type="InterPro" id="IPR011051">
    <property type="entry name" value="RmlC_Cupin_sf"/>
</dbReference>
<dbReference type="PANTHER" id="PTHR36156:SF2">
    <property type="entry name" value="CUPIN TYPE-2 DOMAIN-CONTAINING PROTEIN"/>
    <property type="match status" value="1"/>
</dbReference>
<dbReference type="PANTHER" id="PTHR36156">
    <property type="entry name" value="SLR2101 PROTEIN"/>
    <property type="match status" value="1"/>
</dbReference>
<dbReference type="SUPFAM" id="SSF51182">
    <property type="entry name" value="RmlC-like cupins"/>
    <property type="match status" value="1"/>
</dbReference>
<protein>
    <recommendedName>
        <fullName evidence="5">Cupin-domain-containing oxidoreductase srdD</fullName>
        <ecNumber evidence="7">1.-.-.-</ecNumber>
    </recommendedName>
    <alternativeName>
        <fullName evidence="5">Sordarial biosynthesis cluster protein srdD</fullName>
    </alternativeName>
</protein>
<name>SRDD_NEUCR</name>
<organism>
    <name type="scientific">Neurospora crassa (strain ATCC 24698 / 74-OR23-1A / CBS 708.71 / DSM 1257 / FGSC 987)</name>
    <dbReference type="NCBI Taxonomy" id="367110"/>
    <lineage>
        <taxon>Eukaryota</taxon>
        <taxon>Fungi</taxon>
        <taxon>Dikarya</taxon>
        <taxon>Ascomycota</taxon>
        <taxon>Pezizomycotina</taxon>
        <taxon>Sordariomycetes</taxon>
        <taxon>Sordariomycetidae</taxon>
        <taxon>Sordariales</taxon>
        <taxon>Sordariaceae</taxon>
        <taxon>Neurospora</taxon>
    </lineage>
</organism>
<feature type="chain" id="PRO_0000449331" description="Cupin-domain-containing oxidoreductase srdD">
    <location>
        <begin position="1"/>
        <end position="196"/>
    </location>
</feature>
<feature type="region of interest" description="Cupin-like domain" evidence="1">
    <location>
        <begin position="99"/>
        <end position="165"/>
    </location>
</feature>
<accession>Q7SHI3</accession>
<comment type="function">
    <text evidence="2 3 4">Highly reducing polyketide synthase; part of the gene cluster that mediates the biosynthesis of sordarial, a salicylic aldehyde structurally related to the phytotoxin pyriculol (PubMed:19277664, PubMed:28485098, PubMed:30908040). The most interesting aspect of this pathway is formation of an aromatic product from the highly reducing polyketide synthase srdA (PubMed:30908040). SrdA synthesizes a reduced polyketide chain from one molecule of acetyl-CoA and five molecules of malonyl-CoA (PubMed:30908040). The polyketide chain is then reductively released as an aldehyde (PubMed:30908040). The oxidoreductases srdC, srdD and srdE then oxidize one of the hydroxy groups to facilitate the intramolecular aldol condensation, followed by dehydration to yield a salicylic aldehyde (PubMed:30908040). This aldehyde can undergo facile reduction by endogenous reductases to yield the alcohol 1-hydroxy-2-hydroxymethyl-3-pent-1,3-dienylbenzene (PubMed:30908040). The flavin-dependent srdI counteract against the propensity of the aldehydes to be reduced under physiological conditions and is responsible for reoxidizing 1-hydroxy-2-hydroxymethyl-3-pent-1,3-dienylbenzene back to the salicylic aldehyde (PubMed:30908040). This salicylic aldehyde is then selectively epoxidized by the cupin-domain-containing oxidoreductase srdB to yield the epoxide, which can be hydrolyzed stereoselectively by the hydrolase srdG to give the final product sordarial (PubMed:30908040).</text>
</comment>
<comment type="induction">
    <text evidence="2 3">Expression is up-regulated during sexual development (PubMed:19277664). Expression is also up-regulated during confrontation with the arthropod fungivore Drosophila melanogaster (PubMed:28485098).</text>
</comment>
<comment type="similarity">
    <text evidence="6">Belongs to the virC family.</text>
</comment>
<comment type="caution">
    <text evidence="3 4">A recent genetics report associated srdA and its cluster with the biosynthesis of furanocoumarin neurosporin A, a metabolite produced by N.crassa for chemoresistance against predation by arthropod fungivores (PubMed:28485098). However, based on the gene cluster organization and predicted gene functions, this cluster is unlikely to be involved in neurosporin A biosynthesis, but instead produces compounds similar to pyriculol (PubMed:30908040).</text>
</comment>
<keyword id="KW-0560">Oxidoreductase</keyword>
<keyword id="KW-1185">Reference proteome</keyword>
<reference key="1">
    <citation type="journal article" date="2003" name="Nature">
        <title>The genome sequence of the filamentous fungus Neurospora crassa.</title>
        <authorList>
            <person name="Galagan J.E."/>
            <person name="Calvo S.E."/>
            <person name="Borkovich K.A."/>
            <person name="Selker E.U."/>
            <person name="Read N.D."/>
            <person name="Jaffe D.B."/>
            <person name="FitzHugh W."/>
            <person name="Ma L.-J."/>
            <person name="Smirnov S."/>
            <person name="Purcell S."/>
            <person name="Rehman B."/>
            <person name="Elkins T."/>
            <person name="Engels R."/>
            <person name="Wang S."/>
            <person name="Nielsen C.B."/>
            <person name="Butler J."/>
            <person name="Endrizzi M."/>
            <person name="Qui D."/>
            <person name="Ianakiev P."/>
            <person name="Bell-Pedersen D."/>
            <person name="Nelson M.A."/>
            <person name="Werner-Washburne M."/>
            <person name="Selitrennikoff C.P."/>
            <person name="Kinsey J.A."/>
            <person name="Braun E.L."/>
            <person name="Zelter A."/>
            <person name="Schulte U."/>
            <person name="Kothe G.O."/>
            <person name="Jedd G."/>
            <person name="Mewes H.-W."/>
            <person name="Staben C."/>
            <person name="Marcotte E."/>
            <person name="Greenberg D."/>
            <person name="Roy A."/>
            <person name="Foley K."/>
            <person name="Naylor J."/>
            <person name="Stange-Thomann N."/>
            <person name="Barrett R."/>
            <person name="Gnerre S."/>
            <person name="Kamal M."/>
            <person name="Kamvysselis M."/>
            <person name="Mauceli E.W."/>
            <person name="Bielke C."/>
            <person name="Rudd S."/>
            <person name="Frishman D."/>
            <person name="Krystofova S."/>
            <person name="Rasmussen C."/>
            <person name="Metzenberg R.L."/>
            <person name="Perkins D.D."/>
            <person name="Kroken S."/>
            <person name="Cogoni C."/>
            <person name="Macino G."/>
            <person name="Catcheside D.E.A."/>
            <person name="Li W."/>
            <person name="Pratt R.J."/>
            <person name="Osmani S.A."/>
            <person name="DeSouza C.P.C."/>
            <person name="Glass N.L."/>
            <person name="Orbach M.J."/>
            <person name="Berglund J.A."/>
            <person name="Voelker R."/>
            <person name="Yarden O."/>
            <person name="Plamann M."/>
            <person name="Seiler S."/>
            <person name="Dunlap J.C."/>
            <person name="Radford A."/>
            <person name="Aramayo R."/>
            <person name="Natvig D.O."/>
            <person name="Alex L.A."/>
            <person name="Mannhaupt G."/>
            <person name="Ebbole D.J."/>
            <person name="Freitag M."/>
            <person name="Paulsen I."/>
            <person name="Sachs M.S."/>
            <person name="Lander E.S."/>
            <person name="Nusbaum C."/>
            <person name="Birren B.W."/>
        </authorList>
    </citation>
    <scope>NUCLEOTIDE SEQUENCE [LARGE SCALE GENOMIC DNA]</scope>
    <source>
        <strain>ATCC 24698 / 74-OR23-1A / CBS 708.71 / DSM 1257 / FGSC 987</strain>
    </source>
</reference>
<reference key="2">
    <citation type="journal article" date="2009" name="Curr. Genet.">
        <title>A novel polyketide biosynthesis gene cluster is involved in fruiting body morphogenesis in the filamentous fungi Sordaria macrospora and Neurospora crassa.</title>
        <authorList>
            <person name="Nowrousian M."/>
        </authorList>
    </citation>
    <scope>FUNCTION</scope>
    <scope>INDUCTION</scope>
</reference>
<reference key="3">
    <citation type="journal article" date="2017" name="Environ. Microbiol.">
        <title>Production of a fungal furocoumarin by a polyketide synthase gene cluster confers the chemo-resistance of Neurospora crassa to the predation by fungivorous arthropods.</title>
        <authorList>
            <person name="Zhao Y."/>
            <person name="Ding J."/>
            <person name="Yuan W."/>
            <person name="Huang J."/>
            <person name="Huang W."/>
            <person name="Wang Y."/>
            <person name="Zheng W."/>
        </authorList>
    </citation>
    <scope>FUNCTION</scope>
    <scope>INDUCTION</scope>
</reference>
<reference key="4">
    <citation type="journal article" date="2019" name="J. Nat. Prod.">
        <title>Genome mining reveals Neurospora crassa can produce the salicylaldehyde sordarial.</title>
        <authorList>
            <person name="Zhao Z."/>
            <person name="Ying Y."/>
            <person name="Hung Y.S."/>
            <person name="Tang Y."/>
        </authorList>
    </citation>
    <scope>FUNCTION</scope>
    <scope>PATHWAY</scope>
</reference>
<evidence type="ECO:0000255" key="1"/>
<evidence type="ECO:0000269" key="2">
    <source>
    </source>
</evidence>
<evidence type="ECO:0000269" key="3">
    <source>
    </source>
</evidence>
<evidence type="ECO:0000269" key="4">
    <source>
    </source>
</evidence>
<evidence type="ECO:0000303" key="5">
    <source>
    </source>
</evidence>
<evidence type="ECO:0000305" key="6"/>
<evidence type="ECO:0000305" key="7">
    <source>
    </source>
</evidence>
<sequence>MAPPNKNPNGYYVESFPAPGLRQIVRHITGLNKQGESVFLHSDHGDHHRFMVQNQAISNLLYSTQETPVDLNNNIDIQKAKEKEPPFHYKSGSIVRMIDFGPGVESPLHRAMTIDYGIIVEGVFELILDSGEKRIMRQGDVSVQRATAHKWVNVTGNGTLPGRVMWVLLDCKEVVDAKGEKVEGYLGSLQEHYEGR</sequence>
<gene>
    <name evidence="5" type="primary">srdD</name>
    <name type="ORF">NCU02921</name>
</gene>